<dbReference type="EC" id="2.7.2.2"/>
<dbReference type="EMBL" id="BX571856">
    <property type="protein sequence ID" value="CAG41689.1"/>
    <property type="status" value="ALT_INIT"/>
    <property type="molecule type" value="Genomic_DNA"/>
</dbReference>
<dbReference type="SMR" id="Q6GDH0"/>
<dbReference type="KEGG" id="sar:SAR2711"/>
<dbReference type="HOGENOM" id="CLU_076278_0_0_9"/>
<dbReference type="UniPathway" id="UPA00996">
    <property type="reaction ID" value="UER00366"/>
</dbReference>
<dbReference type="Proteomes" id="UP000000596">
    <property type="component" value="Chromosome"/>
</dbReference>
<dbReference type="GO" id="GO:0005829">
    <property type="term" value="C:cytosol"/>
    <property type="evidence" value="ECO:0007669"/>
    <property type="project" value="TreeGrafter"/>
</dbReference>
<dbReference type="GO" id="GO:0005524">
    <property type="term" value="F:ATP binding"/>
    <property type="evidence" value="ECO:0007669"/>
    <property type="project" value="UniProtKB-KW"/>
</dbReference>
<dbReference type="GO" id="GO:0008804">
    <property type="term" value="F:carbamate kinase activity"/>
    <property type="evidence" value="ECO:0007669"/>
    <property type="project" value="UniProtKB-EC"/>
</dbReference>
<dbReference type="GO" id="GO:0019546">
    <property type="term" value="P:arginine deiminase pathway"/>
    <property type="evidence" value="ECO:0007669"/>
    <property type="project" value="TreeGrafter"/>
</dbReference>
<dbReference type="CDD" id="cd04235">
    <property type="entry name" value="AAK_CK"/>
    <property type="match status" value="1"/>
</dbReference>
<dbReference type="FunFam" id="3.40.1160.10:FF:000007">
    <property type="entry name" value="Carbamate kinase"/>
    <property type="match status" value="1"/>
</dbReference>
<dbReference type="Gene3D" id="3.40.1160.10">
    <property type="entry name" value="Acetylglutamate kinase-like"/>
    <property type="match status" value="1"/>
</dbReference>
<dbReference type="InterPro" id="IPR036393">
    <property type="entry name" value="AceGlu_kinase-like_sf"/>
</dbReference>
<dbReference type="InterPro" id="IPR001048">
    <property type="entry name" value="Asp/Glu/Uridylate_kinase"/>
</dbReference>
<dbReference type="InterPro" id="IPR003964">
    <property type="entry name" value="Carb_kinase"/>
</dbReference>
<dbReference type="NCBIfam" id="TIGR00746">
    <property type="entry name" value="arcC"/>
    <property type="match status" value="1"/>
</dbReference>
<dbReference type="NCBIfam" id="NF009007">
    <property type="entry name" value="PRK12352.1"/>
    <property type="match status" value="1"/>
</dbReference>
<dbReference type="PANTHER" id="PTHR30409">
    <property type="entry name" value="CARBAMATE KINASE"/>
    <property type="match status" value="1"/>
</dbReference>
<dbReference type="PANTHER" id="PTHR30409:SF1">
    <property type="entry name" value="CARBAMATE KINASE-RELATED"/>
    <property type="match status" value="1"/>
</dbReference>
<dbReference type="Pfam" id="PF00696">
    <property type="entry name" value="AA_kinase"/>
    <property type="match status" value="1"/>
</dbReference>
<dbReference type="PIRSF" id="PIRSF000723">
    <property type="entry name" value="Carbamate_kin"/>
    <property type="match status" value="1"/>
</dbReference>
<dbReference type="PRINTS" id="PR01469">
    <property type="entry name" value="CARBMTKINASE"/>
</dbReference>
<dbReference type="SUPFAM" id="SSF53633">
    <property type="entry name" value="Carbamate kinase-like"/>
    <property type="match status" value="1"/>
</dbReference>
<evidence type="ECO:0000305" key="1"/>
<organism>
    <name type="scientific">Staphylococcus aureus (strain MRSA252)</name>
    <dbReference type="NCBI Taxonomy" id="282458"/>
    <lineage>
        <taxon>Bacteria</taxon>
        <taxon>Bacillati</taxon>
        <taxon>Bacillota</taxon>
        <taxon>Bacilli</taxon>
        <taxon>Bacillales</taxon>
        <taxon>Staphylococcaceae</taxon>
        <taxon>Staphylococcus</taxon>
    </lineage>
</organism>
<reference key="1">
    <citation type="journal article" date="2004" name="Proc. Natl. Acad. Sci. U.S.A.">
        <title>Complete genomes of two clinical Staphylococcus aureus strains: evidence for the rapid evolution of virulence and drug resistance.</title>
        <authorList>
            <person name="Holden M.T.G."/>
            <person name="Feil E.J."/>
            <person name="Lindsay J.A."/>
            <person name="Peacock S.J."/>
            <person name="Day N.P.J."/>
            <person name="Enright M.C."/>
            <person name="Foster T.J."/>
            <person name="Moore C.E."/>
            <person name="Hurst L."/>
            <person name="Atkin R."/>
            <person name="Barron A."/>
            <person name="Bason N."/>
            <person name="Bentley S.D."/>
            <person name="Chillingworth C."/>
            <person name="Chillingworth T."/>
            <person name="Churcher C."/>
            <person name="Clark L."/>
            <person name="Corton C."/>
            <person name="Cronin A."/>
            <person name="Doggett J."/>
            <person name="Dowd L."/>
            <person name="Feltwell T."/>
            <person name="Hance Z."/>
            <person name="Harris B."/>
            <person name="Hauser H."/>
            <person name="Holroyd S."/>
            <person name="Jagels K."/>
            <person name="James K.D."/>
            <person name="Lennard N."/>
            <person name="Line A."/>
            <person name="Mayes R."/>
            <person name="Moule S."/>
            <person name="Mungall K."/>
            <person name="Ormond D."/>
            <person name="Quail M.A."/>
            <person name="Rabbinowitsch E."/>
            <person name="Rutherford K.M."/>
            <person name="Sanders M."/>
            <person name="Sharp S."/>
            <person name="Simmonds M."/>
            <person name="Stevens K."/>
            <person name="Whitehead S."/>
            <person name="Barrell B.G."/>
            <person name="Spratt B.G."/>
            <person name="Parkhill J."/>
        </authorList>
    </citation>
    <scope>NUCLEOTIDE SEQUENCE [LARGE SCALE GENOMIC DNA]</scope>
    <source>
        <strain>MRSA252</strain>
    </source>
</reference>
<comment type="catalytic activity">
    <reaction>
        <text>hydrogencarbonate + NH4(+) + ATP = carbamoyl phosphate + ADP + H2O + H(+)</text>
        <dbReference type="Rhea" id="RHEA:10152"/>
        <dbReference type="ChEBI" id="CHEBI:15377"/>
        <dbReference type="ChEBI" id="CHEBI:15378"/>
        <dbReference type="ChEBI" id="CHEBI:17544"/>
        <dbReference type="ChEBI" id="CHEBI:28938"/>
        <dbReference type="ChEBI" id="CHEBI:30616"/>
        <dbReference type="ChEBI" id="CHEBI:58228"/>
        <dbReference type="ChEBI" id="CHEBI:456216"/>
        <dbReference type="EC" id="2.7.2.2"/>
    </reaction>
</comment>
<comment type="pathway">
    <text>Metabolic intermediate metabolism; carbamoyl phosphate degradation; CO(2) and NH(3) from carbamoyl phosphate: step 1/1.</text>
</comment>
<comment type="subcellular location">
    <subcellularLocation>
        <location evidence="1">Cytoplasm</location>
    </subcellularLocation>
</comment>
<comment type="similarity">
    <text evidence="1">Belongs to the carbamate kinase family.</text>
</comment>
<comment type="sequence caution" evidence="1">
    <conflict type="erroneous initiation">
        <sequence resource="EMBL-CDS" id="CAG41689"/>
    </conflict>
</comment>
<protein>
    <recommendedName>
        <fullName>Carbamate kinase 2</fullName>
        <ecNumber>2.7.2.2</ecNumber>
    </recommendedName>
</protein>
<proteinExistence type="inferred from homology"/>
<accession>Q6GDH0</accession>
<keyword id="KW-0056">Arginine metabolism</keyword>
<keyword id="KW-0067">ATP-binding</keyword>
<keyword id="KW-0963">Cytoplasm</keyword>
<keyword id="KW-0418">Kinase</keyword>
<keyword id="KW-0547">Nucleotide-binding</keyword>
<keyword id="KW-0808">Transferase</keyword>
<gene>
    <name type="primary">arcC2</name>
    <name type="ordered locus">SAR2711</name>
</gene>
<sequence length="313" mass="34293">MKEKIVIALGGNAIQTKEATAEAQQTAIRRAMQNLKPLFDSPARIVISHGNGPQIGGLLIQQAKSNSDTTPAMPLDTCGAMSQGMIGYWLETEINRILTEMNSDRTVGTIVTRVEVDKDDPRFDNPTKPIGPFYTKEEVEELQKEQPGSVFKEDAGRGYRKVVASPLPQSILEHQLIRTLADGKNIVIACGGGGIPVIKKENTYEGVEAVIDKDFASEKLATLIEADTLMILTNVENVFINFNEPNQQQIDDIDVATLKKYAAQGKFAEGSMLPKIEAAIRFVESGENKKVIITNLEQAYEALIGNKGTHIHM</sequence>
<feature type="chain" id="PRO_0000185135" description="Carbamate kinase 2">
    <location>
        <begin position="1"/>
        <end position="313"/>
    </location>
</feature>
<name>ARCC2_STAAR</name>